<keyword id="KW-1283">Bacterial microcompartment</keyword>
<keyword id="KW-0846">Cobalamin</keyword>
<keyword id="KW-0170">Cobalt</keyword>
<keyword id="KW-0456">Lyase</keyword>
<protein>
    <recommendedName>
        <fullName evidence="1">Ethanolamine ammonia-lyase small subunit</fullName>
        <shortName evidence="1">EAL small subunit</shortName>
        <ecNumber evidence="1">4.3.1.7</ecNumber>
    </recommendedName>
</protein>
<comment type="function">
    <text evidence="1">Catalyzes the deamination of various vicinal amino-alcohols to oxo compounds. Allows this organism to utilize ethanolamine as the sole source of nitrogen and carbon in the presence of external vitamin B12.</text>
</comment>
<comment type="catalytic activity">
    <reaction evidence="1">
        <text>ethanolamine = acetaldehyde + NH4(+)</text>
        <dbReference type="Rhea" id="RHEA:15313"/>
        <dbReference type="ChEBI" id="CHEBI:15343"/>
        <dbReference type="ChEBI" id="CHEBI:28938"/>
        <dbReference type="ChEBI" id="CHEBI:57603"/>
        <dbReference type="EC" id="4.3.1.7"/>
    </reaction>
</comment>
<comment type="cofactor">
    <cofactor evidence="1">
        <name>adenosylcob(III)alamin</name>
        <dbReference type="ChEBI" id="CHEBI:18408"/>
    </cofactor>
    <text evidence="1">Binds between the large and small subunits.</text>
</comment>
<comment type="pathway">
    <text evidence="1">Amine and polyamine degradation; ethanolamine degradation.</text>
</comment>
<comment type="subunit">
    <text evidence="1">The basic unit is a heterodimer which dimerizes to form tetramers. The heterotetramers trimerize; 6 large subunits form a core ring with 6 small subunits projecting outwards.</text>
</comment>
<comment type="subcellular location">
    <subcellularLocation>
        <location evidence="1">Bacterial microcompartment</location>
    </subcellularLocation>
</comment>
<comment type="similarity">
    <text evidence="1 2">Belongs to the EutC family.</text>
</comment>
<accession>Q59782</accession>
<evidence type="ECO:0000255" key="1">
    <source>
        <dbReference type="HAMAP-Rule" id="MF_00601"/>
    </source>
</evidence>
<evidence type="ECO:0000305" key="2"/>
<reference key="1">
    <citation type="journal article" date="1994" name="Can. J. Microbiol.">
        <title>Sequence of Rhodococcus gene cluster encoding the subunits of ethanolamine ammonia-lyase and an APC-like permease.</title>
        <authorList>
            <person name="De Mot R."/>
            <person name="Nagy I."/>
            <person name="Schoofs G."/>
            <person name="Vanderleyden J."/>
        </authorList>
    </citation>
    <scope>NUCLEOTIDE SEQUENCE [GENOMIC DNA]</scope>
    <source>
        <strain>NI86/21</strain>
    </source>
</reference>
<gene>
    <name evidence="1" type="primary">eutC</name>
</gene>
<sequence length="257" mass="26964">MTEDQAPILDFWGPLRKTTQSRIGLGRAGDSLPTKRVLEFKAAHAAARDAVHEPLDSETLASRVDGVGIGAPVVVASSVSTRSEYLRRPDLGRQPADLSAIKSSDKEIGFILADGLSPRALMDHGEQLLSALVTALGERYSIAPPVIATNARVALGDHIAAAMGVQTAIVLIGERPGLSVADSVGIYLTHLPRVGRTDADRNCISNVHPPEGLGYEQAARVVLGLVTGARQLGRSGVDLKDTSRADAVASGEVLTLD</sequence>
<name>EUTC_RHOER</name>
<dbReference type="EC" id="4.3.1.7" evidence="1"/>
<dbReference type="EMBL" id="L24492">
    <property type="protein sequence ID" value="AAC37137.1"/>
    <property type="molecule type" value="Genomic_DNA"/>
</dbReference>
<dbReference type="RefSeq" id="WP_182263023.1">
    <property type="nucleotide sequence ID" value="NZ_JABBPH010000001.1"/>
</dbReference>
<dbReference type="SMR" id="Q59782"/>
<dbReference type="STRING" id="1833.XU06_08940"/>
<dbReference type="UniPathway" id="UPA00560"/>
<dbReference type="GO" id="GO:0009350">
    <property type="term" value="C:ethanolamine ammonia-lyase complex"/>
    <property type="evidence" value="ECO:0007669"/>
    <property type="project" value="UniProtKB-UniRule"/>
</dbReference>
<dbReference type="GO" id="GO:0031471">
    <property type="term" value="C:ethanolamine degradation polyhedral organelle"/>
    <property type="evidence" value="ECO:0007669"/>
    <property type="project" value="UniProtKB-UniRule"/>
</dbReference>
<dbReference type="GO" id="GO:0031419">
    <property type="term" value="F:cobalamin binding"/>
    <property type="evidence" value="ECO:0007669"/>
    <property type="project" value="UniProtKB-UniRule"/>
</dbReference>
<dbReference type="GO" id="GO:0008851">
    <property type="term" value="F:ethanolamine ammonia-lyase activity"/>
    <property type="evidence" value="ECO:0007669"/>
    <property type="project" value="UniProtKB-UniRule"/>
</dbReference>
<dbReference type="GO" id="GO:0006520">
    <property type="term" value="P:amino acid metabolic process"/>
    <property type="evidence" value="ECO:0007669"/>
    <property type="project" value="InterPro"/>
</dbReference>
<dbReference type="GO" id="GO:0046336">
    <property type="term" value="P:ethanolamine catabolic process"/>
    <property type="evidence" value="ECO:0007669"/>
    <property type="project" value="UniProtKB-UniRule"/>
</dbReference>
<dbReference type="Gene3D" id="3.40.50.11240">
    <property type="entry name" value="Ethanolamine ammonia-lyase light chain (EutC)"/>
    <property type="match status" value="1"/>
</dbReference>
<dbReference type="Gene3D" id="1.10.30.40">
    <property type="entry name" value="Ethanolamine ammonia-lyase light chain (EutC), N-terminal domain"/>
    <property type="match status" value="1"/>
</dbReference>
<dbReference type="HAMAP" id="MF_00601">
    <property type="entry name" value="EutC"/>
    <property type="match status" value="1"/>
</dbReference>
<dbReference type="InterPro" id="IPR009246">
    <property type="entry name" value="EutC"/>
</dbReference>
<dbReference type="InterPro" id="IPR042251">
    <property type="entry name" value="EutC_C"/>
</dbReference>
<dbReference type="InterPro" id="IPR042255">
    <property type="entry name" value="EutC_N"/>
</dbReference>
<dbReference type="NCBIfam" id="NF003971">
    <property type="entry name" value="PRK05465.1"/>
    <property type="match status" value="1"/>
</dbReference>
<dbReference type="PANTHER" id="PTHR39330">
    <property type="entry name" value="ETHANOLAMINE AMMONIA-LYASE LIGHT CHAIN"/>
    <property type="match status" value="1"/>
</dbReference>
<dbReference type="PANTHER" id="PTHR39330:SF1">
    <property type="entry name" value="ETHANOLAMINE AMMONIA-LYASE SMALL SUBUNIT"/>
    <property type="match status" value="1"/>
</dbReference>
<dbReference type="Pfam" id="PF05985">
    <property type="entry name" value="EutC"/>
    <property type="match status" value="1"/>
</dbReference>
<dbReference type="PIRSF" id="PIRSF018982">
    <property type="entry name" value="EutC"/>
    <property type="match status" value="1"/>
</dbReference>
<feature type="chain" id="PRO_0000206001" description="Ethanolamine ammonia-lyase small subunit">
    <location>
        <begin position="1"/>
        <end position="257"/>
    </location>
</feature>
<feature type="binding site" evidence="1">
    <location>
        <position position="153"/>
    </location>
    <ligand>
        <name>adenosylcob(III)alamin</name>
        <dbReference type="ChEBI" id="CHEBI:18408"/>
    </ligand>
</feature>
<feature type="binding site" evidence="1">
    <location>
        <position position="174"/>
    </location>
    <ligand>
        <name>adenosylcob(III)alamin</name>
        <dbReference type="ChEBI" id="CHEBI:18408"/>
    </ligand>
</feature>
<feature type="binding site" evidence="1">
    <location>
        <position position="203"/>
    </location>
    <ligand>
        <name>adenosylcob(III)alamin</name>
        <dbReference type="ChEBI" id="CHEBI:18408"/>
    </ligand>
</feature>
<organism>
    <name type="scientific">Rhodococcus erythropolis</name>
    <name type="common">Arthrobacter picolinophilus</name>
    <dbReference type="NCBI Taxonomy" id="1833"/>
    <lineage>
        <taxon>Bacteria</taxon>
        <taxon>Bacillati</taxon>
        <taxon>Actinomycetota</taxon>
        <taxon>Actinomycetes</taxon>
        <taxon>Mycobacteriales</taxon>
        <taxon>Nocardiaceae</taxon>
        <taxon>Rhodococcus</taxon>
        <taxon>Rhodococcus erythropolis group</taxon>
    </lineage>
</organism>
<proteinExistence type="inferred from homology"/>